<feature type="chain" id="PRO_0000228809" description="Rac GTPase-activating protein 1">
    <location>
        <begin position="1"/>
        <end position="628"/>
    </location>
</feature>
<feature type="domain" description="Rho-GAP" evidence="5">
    <location>
        <begin position="350"/>
        <end position="540"/>
    </location>
</feature>
<feature type="zinc finger region" description="Phorbol-ester/DAG-type" evidence="6">
    <location>
        <begin position="287"/>
        <end position="336"/>
    </location>
</feature>
<feature type="region of interest" description="Interaction with SLC26A8" evidence="1">
    <location>
        <begin position="107"/>
        <end position="286"/>
    </location>
</feature>
<feature type="region of interest" description="Disordered" evidence="7">
    <location>
        <begin position="179"/>
        <end position="201"/>
    </location>
</feature>
<feature type="region of interest" description="Disordered" evidence="7">
    <location>
        <begin position="242"/>
        <end position="284"/>
    </location>
</feature>
<feature type="coiled-coil region" evidence="4">
    <location>
        <begin position="33"/>
        <end position="110"/>
    </location>
</feature>
<feature type="compositionally biased region" description="Polar residues" evidence="7">
    <location>
        <begin position="274"/>
        <end position="283"/>
    </location>
</feature>
<feature type="site" description="Arginine finger; crucial for GTP hydrolysis by stabilizing the transition state" evidence="5">
    <location>
        <position position="386"/>
    </location>
</feature>
<feature type="modified residue" description="N-acetylmethionine" evidence="2">
    <location>
        <position position="1"/>
    </location>
</feature>
<feature type="modified residue" description="Phosphoserine; by PLK1" evidence="2">
    <location>
        <position position="150"/>
    </location>
</feature>
<feature type="modified residue" description="Phosphoserine" evidence="2">
    <location>
        <position position="155"/>
    </location>
</feature>
<feature type="modified residue" description="Phosphoserine; by PLK1" evidence="2">
    <location>
        <position position="158"/>
    </location>
</feature>
<feature type="modified residue" description="Phosphothreonine" evidence="2">
    <location>
        <position position="162"/>
    </location>
</feature>
<feature type="modified residue" description="Phosphoserine; by PLK1" evidence="2">
    <location>
        <position position="165"/>
    </location>
</feature>
<feature type="modified residue" description="Phosphoserine; by PLK1" evidence="2">
    <location>
        <position position="171"/>
    </location>
</feature>
<feature type="modified residue" description="Phosphoserine" evidence="2">
    <location>
        <position position="204"/>
    </location>
</feature>
<feature type="modified residue" description="Phosphoserine" evidence="2">
    <location>
        <position position="207"/>
    </location>
</feature>
<feature type="modified residue" description="Phosphoserine" evidence="2">
    <location>
        <position position="215"/>
    </location>
</feature>
<feature type="modified residue" description="Phosphoserine" evidence="2">
    <location>
        <position position="258"/>
    </location>
</feature>
<feature type="modified residue" description="Phosphothreonine" evidence="2">
    <location>
        <position position="343"/>
    </location>
</feature>
<feature type="modified residue" description="Phosphoserine; by AURKB" evidence="2">
    <location>
        <position position="388"/>
    </location>
</feature>
<feature type="modified residue" description="Phosphoserine; by AURKB" evidence="2">
    <location>
        <position position="411"/>
    </location>
</feature>
<feature type="modified residue" description="Phosphothreonine" evidence="23">
    <location>
        <position position="564"/>
    </location>
</feature>
<feature type="modified residue" description="Phosphothreonine" evidence="23">
    <location>
        <position position="577"/>
    </location>
</feature>
<feature type="modified residue" description="Phosphothreonine" evidence="23">
    <location>
        <position position="585"/>
    </location>
</feature>
<feature type="modified residue" description="Phosphothreonine" evidence="2">
    <location>
        <position position="602"/>
    </location>
</feature>
<feature type="cross-link" description="Glycyl lysine isopeptide (Lys-Gly) (interchain with G-Cter in SUMO2)" evidence="2">
    <location>
        <position position="249"/>
    </location>
</feature>
<feature type="cross-link" description="Glycyl lysine isopeptide (Lys-Gly) (interchain with G-Cter in SUMO2)" evidence="2">
    <location>
        <position position="405"/>
    </location>
</feature>
<feature type="sequence conflict" description="In Ref. 4; BAE38561." evidence="13" ref="4">
    <original>IEF</original>
    <variation>MES</variation>
    <location>
        <begin position="29"/>
        <end position="31"/>
    </location>
</feature>
<feature type="sequence conflict" description="In Ref. 4; BAE40131/BAE40010." evidence="13" ref="4">
    <original>Q</original>
    <variation>E</variation>
    <location>
        <position position="100"/>
    </location>
</feature>
<feature type="sequence conflict" description="In Ref. 4; BAE40005." evidence="13" ref="4">
    <original>K</original>
    <variation>E</variation>
    <location>
        <position position="398"/>
    </location>
</feature>
<feature type="sequence conflict" description="In Ref. 4; BAE40005." evidence="13" ref="4">
    <original>P</original>
    <variation>T</variation>
    <location>
        <position position="623"/>
    </location>
</feature>
<name>RGAP1_MOUSE</name>
<evidence type="ECO:0000250" key="1"/>
<evidence type="ECO:0000250" key="2">
    <source>
        <dbReference type="UniProtKB" id="Q9H0H5"/>
    </source>
</evidence>
<evidence type="ECO:0000250" key="3">
    <source>
        <dbReference type="UniProtKB" id="Q9P2W2"/>
    </source>
</evidence>
<evidence type="ECO:0000255" key="4"/>
<evidence type="ECO:0000255" key="5">
    <source>
        <dbReference type="PROSITE-ProRule" id="PRU00172"/>
    </source>
</evidence>
<evidence type="ECO:0000255" key="6">
    <source>
        <dbReference type="PROSITE-ProRule" id="PRU00226"/>
    </source>
</evidence>
<evidence type="ECO:0000256" key="7">
    <source>
        <dbReference type="SAM" id="MobiDB-lite"/>
    </source>
</evidence>
<evidence type="ECO:0000269" key="8">
    <source>
    </source>
</evidence>
<evidence type="ECO:0000269" key="9">
    <source>
    </source>
</evidence>
<evidence type="ECO:0000269" key="10">
    <source>
    </source>
</evidence>
<evidence type="ECO:0000269" key="11">
    <source>
    </source>
</evidence>
<evidence type="ECO:0000269" key="12">
    <source>
    </source>
</evidence>
<evidence type="ECO:0000305" key="13"/>
<evidence type="ECO:0000312" key="14">
    <source>
        <dbReference type="EMBL" id="AAD40487.1"/>
    </source>
</evidence>
<evidence type="ECO:0000312" key="15">
    <source>
        <dbReference type="EMBL" id="AAG43539.1"/>
    </source>
</evidence>
<evidence type="ECO:0000312" key="16">
    <source>
        <dbReference type="EMBL" id="AAH10715.1"/>
    </source>
</evidence>
<evidence type="ECO:0000312" key="17">
    <source>
        <dbReference type="EMBL" id="BAA90248.1"/>
    </source>
</evidence>
<evidence type="ECO:0000312" key="18">
    <source>
        <dbReference type="EMBL" id="BAE32931.1"/>
    </source>
</evidence>
<evidence type="ECO:0000312" key="19">
    <source>
        <dbReference type="EMBL" id="BAE38446.1"/>
    </source>
</evidence>
<evidence type="ECO:0000312" key="20">
    <source>
        <dbReference type="EMBL" id="BAE40131.1"/>
    </source>
</evidence>
<evidence type="ECO:0000312" key="21">
    <source>
        <dbReference type="EMBL" id="BAE40528.1"/>
    </source>
</evidence>
<evidence type="ECO:0000312" key="22">
    <source>
        <dbReference type="MGI" id="MGI:1349423"/>
    </source>
</evidence>
<evidence type="ECO:0007744" key="23">
    <source>
    </source>
</evidence>
<protein>
    <recommendedName>
        <fullName>Rac GTPase-activating protein 1</fullName>
    </recommendedName>
    <alternativeName>
        <fullName>Male germ cell RacGap</fullName>
        <shortName>MgcRacGAP</shortName>
    </alternativeName>
</protein>
<organism>
    <name type="scientific">Mus musculus</name>
    <name type="common">Mouse</name>
    <dbReference type="NCBI Taxonomy" id="10090"/>
    <lineage>
        <taxon>Eukaryota</taxon>
        <taxon>Metazoa</taxon>
        <taxon>Chordata</taxon>
        <taxon>Craniata</taxon>
        <taxon>Vertebrata</taxon>
        <taxon>Euteleostomi</taxon>
        <taxon>Mammalia</taxon>
        <taxon>Eutheria</taxon>
        <taxon>Euarchontoglires</taxon>
        <taxon>Glires</taxon>
        <taxon>Rodentia</taxon>
        <taxon>Myomorpha</taxon>
        <taxon>Muroidea</taxon>
        <taxon>Muridae</taxon>
        <taxon>Murinae</taxon>
        <taxon>Mus</taxon>
        <taxon>Mus</taxon>
    </lineage>
</organism>
<reference evidence="13 14" key="1">
    <citation type="journal article" date="1999" name="DNA Cell Biol.">
        <title>Identification and characterization of a transcript for a novel Rac GTPase-activating protein in terminally differentiating 3T3-L1 adipocytes.</title>
        <authorList>
            <person name="Wooltorton E.J."/>
            <person name="Haliotis T."/>
            <person name="Mueller C.R."/>
        </authorList>
    </citation>
    <scope>NUCLEOTIDE SEQUENCE [MRNA]</scope>
    <scope>FUNCTION</scope>
    <source>
        <tissue evidence="8">Erythroleukemia</tissue>
    </source>
</reference>
<reference evidence="13 17" key="2">
    <citation type="journal article" date="2000" name="Blood">
        <title>MgcRacGAP is involved in the control of growth and differentiation of hematopoietic cells.</title>
        <authorList>
            <person name="Kawashima T."/>
            <person name="Hirose K."/>
            <person name="Satoh T."/>
            <person name="Kaneko A."/>
            <person name="Ikeda Y."/>
            <person name="Kaziro Y."/>
            <person name="Nosaka T."/>
            <person name="Kitamura T."/>
        </authorList>
    </citation>
    <scope>NUCLEOTIDE SEQUENCE [MRNA]</scope>
    <scope>FUNCTION</scope>
    <scope>TISSUE SPECIFICITY</scope>
    <scope>INDUCTION</scope>
</reference>
<reference evidence="13 15" key="3">
    <citation type="journal article" date="2001" name="Mech. Dev.">
        <title>Mice with a homozygous gene trap vector insertion in mgcRacGAP die during pre-implantation development.</title>
        <authorList>
            <person name="Van de Putte T."/>
            <person name="Zwijsen A."/>
            <person name="Lonnoy O."/>
            <person name="Rybin V."/>
            <person name="Cozijnsen M."/>
            <person name="Francis A."/>
            <person name="Baekelandt V."/>
            <person name="Kozak C.A."/>
            <person name="Zerial M."/>
            <person name="Huylebroeck D."/>
        </authorList>
    </citation>
    <scope>NUCLEOTIDE SEQUENCE [MRNA]</scope>
    <scope>FUNCTION</scope>
    <scope>TISSUE SPECIFICITY</scope>
    <scope>DEVELOPMENTAL STAGE</scope>
    <source>
        <strain evidence="15">CD-1</strain>
    </source>
</reference>
<reference evidence="18" key="4">
    <citation type="journal article" date="2005" name="Science">
        <title>The transcriptional landscape of the mammalian genome.</title>
        <authorList>
            <person name="Carninci P."/>
            <person name="Kasukawa T."/>
            <person name="Katayama S."/>
            <person name="Gough J."/>
            <person name="Frith M.C."/>
            <person name="Maeda N."/>
            <person name="Oyama R."/>
            <person name="Ravasi T."/>
            <person name="Lenhard B."/>
            <person name="Wells C."/>
            <person name="Kodzius R."/>
            <person name="Shimokawa K."/>
            <person name="Bajic V.B."/>
            <person name="Brenner S.E."/>
            <person name="Batalov S."/>
            <person name="Forrest A.R."/>
            <person name="Zavolan M."/>
            <person name="Davis M.J."/>
            <person name="Wilming L.G."/>
            <person name="Aidinis V."/>
            <person name="Allen J.E."/>
            <person name="Ambesi-Impiombato A."/>
            <person name="Apweiler R."/>
            <person name="Aturaliya R.N."/>
            <person name="Bailey T.L."/>
            <person name="Bansal M."/>
            <person name="Baxter L."/>
            <person name="Beisel K.W."/>
            <person name="Bersano T."/>
            <person name="Bono H."/>
            <person name="Chalk A.M."/>
            <person name="Chiu K.P."/>
            <person name="Choudhary V."/>
            <person name="Christoffels A."/>
            <person name="Clutterbuck D.R."/>
            <person name="Crowe M.L."/>
            <person name="Dalla E."/>
            <person name="Dalrymple B.P."/>
            <person name="de Bono B."/>
            <person name="Della Gatta G."/>
            <person name="di Bernardo D."/>
            <person name="Down T."/>
            <person name="Engstrom P."/>
            <person name="Fagiolini M."/>
            <person name="Faulkner G."/>
            <person name="Fletcher C.F."/>
            <person name="Fukushima T."/>
            <person name="Furuno M."/>
            <person name="Futaki S."/>
            <person name="Gariboldi M."/>
            <person name="Georgii-Hemming P."/>
            <person name="Gingeras T.R."/>
            <person name="Gojobori T."/>
            <person name="Green R.E."/>
            <person name="Gustincich S."/>
            <person name="Harbers M."/>
            <person name="Hayashi Y."/>
            <person name="Hensch T.K."/>
            <person name="Hirokawa N."/>
            <person name="Hill D."/>
            <person name="Huminiecki L."/>
            <person name="Iacono M."/>
            <person name="Ikeo K."/>
            <person name="Iwama A."/>
            <person name="Ishikawa T."/>
            <person name="Jakt M."/>
            <person name="Kanapin A."/>
            <person name="Katoh M."/>
            <person name="Kawasawa Y."/>
            <person name="Kelso J."/>
            <person name="Kitamura H."/>
            <person name="Kitano H."/>
            <person name="Kollias G."/>
            <person name="Krishnan S.P."/>
            <person name="Kruger A."/>
            <person name="Kummerfeld S.K."/>
            <person name="Kurochkin I.V."/>
            <person name="Lareau L.F."/>
            <person name="Lazarevic D."/>
            <person name="Lipovich L."/>
            <person name="Liu J."/>
            <person name="Liuni S."/>
            <person name="McWilliam S."/>
            <person name="Madan Babu M."/>
            <person name="Madera M."/>
            <person name="Marchionni L."/>
            <person name="Matsuda H."/>
            <person name="Matsuzawa S."/>
            <person name="Miki H."/>
            <person name="Mignone F."/>
            <person name="Miyake S."/>
            <person name="Morris K."/>
            <person name="Mottagui-Tabar S."/>
            <person name="Mulder N."/>
            <person name="Nakano N."/>
            <person name="Nakauchi H."/>
            <person name="Ng P."/>
            <person name="Nilsson R."/>
            <person name="Nishiguchi S."/>
            <person name="Nishikawa S."/>
            <person name="Nori F."/>
            <person name="Ohara O."/>
            <person name="Okazaki Y."/>
            <person name="Orlando V."/>
            <person name="Pang K.C."/>
            <person name="Pavan W.J."/>
            <person name="Pavesi G."/>
            <person name="Pesole G."/>
            <person name="Petrovsky N."/>
            <person name="Piazza S."/>
            <person name="Reed J."/>
            <person name="Reid J.F."/>
            <person name="Ring B.Z."/>
            <person name="Ringwald M."/>
            <person name="Rost B."/>
            <person name="Ruan Y."/>
            <person name="Salzberg S.L."/>
            <person name="Sandelin A."/>
            <person name="Schneider C."/>
            <person name="Schoenbach C."/>
            <person name="Sekiguchi K."/>
            <person name="Semple C.A."/>
            <person name="Seno S."/>
            <person name="Sessa L."/>
            <person name="Sheng Y."/>
            <person name="Shibata Y."/>
            <person name="Shimada H."/>
            <person name="Shimada K."/>
            <person name="Silva D."/>
            <person name="Sinclair B."/>
            <person name="Sperling S."/>
            <person name="Stupka E."/>
            <person name="Sugiura K."/>
            <person name="Sultana R."/>
            <person name="Takenaka Y."/>
            <person name="Taki K."/>
            <person name="Tammoja K."/>
            <person name="Tan S.L."/>
            <person name="Tang S."/>
            <person name="Taylor M.S."/>
            <person name="Tegner J."/>
            <person name="Teichmann S.A."/>
            <person name="Ueda H.R."/>
            <person name="van Nimwegen E."/>
            <person name="Verardo R."/>
            <person name="Wei C.L."/>
            <person name="Yagi K."/>
            <person name="Yamanishi H."/>
            <person name="Zabarovsky E."/>
            <person name="Zhu S."/>
            <person name="Zimmer A."/>
            <person name="Hide W."/>
            <person name="Bult C."/>
            <person name="Grimmond S.M."/>
            <person name="Teasdale R.D."/>
            <person name="Liu E.T."/>
            <person name="Brusic V."/>
            <person name="Quackenbush J."/>
            <person name="Wahlestedt C."/>
            <person name="Mattick J.S."/>
            <person name="Hume D.A."/>
            <person name="Kai C."/>
            <person name="Sasaki D."/>
            <person name="Tomaru Y."/>
            <person name="Fukuda S."/>
            <person name="Kanamori-Katayama M."/>
            <person name="Suzuki M."/>
            <person name="Aoki J."/>
            <person name="Arakawa T."/>
            <person name="Iida J."/>
            <person name="Imamura K."/>
            <person name="Itoh M."/>
            <person name="Kato T."/>
            <person name="Kawaji H."/>
            <person name="Kawagashira N."/>
            <person name="Kawashima T."/>
            <person name="Kojima M."/>
            <person name="Kondo S."/>
            <person name="Konno H."/>
            <person name="Nakano K."/>
            <person name="Ninomiya N."/>
            <person name="Nishio T."/>
            <person name="Okada M."/>
            <person name="Plessy C."/>
            <person name="Shibata K."/>
            <person name="Shiraki T."/>
            <person name="Suzuki S."/>
            <person name="Tagami M."/>
            <person name="Waki K."/>
            <person name="Watahiki A."/>
            <person name="Okamura-Oho Y."/>
            <person name="Suzuki H."/>
            <person name="Kawai J."/>
            <person name="Hayashizaki Y."/>
        </authorList>
    </citation>
    <scope>NUCLEOTIDE SEQUENCE [LARGE SCALE MRNA]</scope>
    <source>
        <strain evidence="21">C57BL/6J</strain>
        <strain evidence="20">DBA/2J</strain>
        <strain evidence="18">NOD</strain>
        <tissue evidence="21">Heart</tissue>
        <tissue evidence="19">Lung</tissue>
    </source>
</reference>
<reference evidence="16" key="5">
    <citation type="journal article" date="2004" name="Genome Res.">
        <title>The status, quality, and expansion of the NIH full-length cDNA project: the Mammalian Gene Collection (MGC).</title>
        <authorList>
            <consortium name="The MGC Project Team"/>
        </authorList>
    </citation>
    <scope>NUCLEOTIDE SEQUENCE [LARGE SCALE MRNA]</scope>
    <source>
        <strain evidence="16">FVB/N</strain>
        <tissue evidence="16">Mammary gland</tissue>
    </source>
</reference>
<reference evidence="13" key="6">
    <citation type="journal article" date="1999" name="Biochem. J.">
        <title>Structure and expression of murine mgcRacGAP: its developmental regulation suggests a role for the Rac/MgcRacGAP signalling pathway in neurogenesis.</title>
        <authorList>
            <person name="Arar C."/>
            <person name="Ott M.-O."/>
            <person name="Toure A."/>
            <person name="Gacon G."/>
        </authorList>
    </citation>
    <scope>FUNCTION</scope>
    <scope>TISSUE SPECIFICITY</scope>
</reference>
<reference evidence="13" key="7">
    <citation type="journal article" date="2003" name="Biochem. J.">
        <title>Rho family GTPase Rnd2 interacts and co-localizes with MgcRacGAP in male germ cells.</title>
        <authorList>
            <person name="Naud N."/>
            <person name="Toure A."/>
            <person name="Liu J."/>
            <person name="Pineau C."/>
            <person name="Morin L."/>
            <person name="Dorseuil O."/>
            <person name="Escalier D."/>
            <person name="Chardin P."/>
            <person name="Gacon G."/>
        </authorList>
    </citation>
    <scope>SUBCELLULAR LOCATION</scope>
</reference>
<reference key="8">
    <citation type="journal article" date="2010" name="Cell">
        <title>A tissue-specific atlas of mouse protein phosphorylation and expression.</title>
        <authorList>
            <person name="Huttlin E.L."/>
            <person name="Jedrychowski M.P."/>
            <person name="Elias J.E."/>
            <person name="Goswami T."/>
            <person name="Rad R."/>
            <person name="Beausoleil S.A."/>
            <person name="Villen J."/>
            <person name="Haas W."/>
            <person name="Sowa M.E."/>
            <person name="Gygi S.P."/>
        </authorList>
    </citation>
    <scope>PHOSPHORYLATION [LARGE SCALE ANALYSIS] AT THR-564; THR-577 AND THR-585</scope>
    <scope>IDENTIFICATION BY MASS SPECTROMETRY [LARGE SCALE ANALYSIS]</scope>
    <source>
        <tissue>Spleen</tissue>
    </source>
</reference>
<keyword id="KW-0007">Acetylation</keyword>
<keyword id="KW-0131">Cell cycle</keyword>
<keyword id="KW-0132">Cell division</keyword>
<keyword id="KW-1003">Cell membrane</keyword>
<keyword id="KW-0175">Coiled coil</keyword>
<keyword id="KW-0963">Cytoplasm</keyword>
<keyword id="KW-0968">Cytoplasmic vesicle</keyword>
<keyword id="KW-0206">Cytoskeleton</keyword>
<keyword id="KW-0217">Developmental protein</keyword>
<keyword id="KW-0221">Differentiation</keyword>
<keyword id="KW-0343">GTPase activation</keyword>
<keyword id="KW-0406">Ion transport</keyword>
<keyword id="KW-1017">Isopeptide bond</keyword>
<keyword id="KW-0446">Lipid-binding</keyword>
<keyword id="KW-0472">Membrane</keyword>
<keyword id="KW-0479">Metal-binding</keyword>
<keyword id="KW-0539">Nucleus</keyword>
<keyword id="KW-0597">Phosphoprotein</keyword>
<keyword id="KW-1185">Reference proteome</keyword>
<keyword id="KW-0744">Spermatogenesis</keyword>
<keyword id="KW-0813">Transport</keyword>
<keyword id="KW-0832">Ubl conjugation</keyword>
<keyword id="KW-0862">Zinc</keyword>
<keyword id="KW-0863">Zinc-finger</keyword>
<proteinExistence type="evidence at protein level"/>
<comment type="function">
    <text evidence="2 8 9 10 11">Component of the centralspindlin complex that serves as a microtubule-dependent and Rho-mediated signaling required for the myosin contractile ring formation during the cell cycle cytokinesis. Required for proper attachment of the midbody to the cell membrane during cytokinesis. Sequentially binds to ECT2 and RAB11FIP3 which regulates cleavage furrow ingression and abscission during cytokinesis. Plays key roles in controlling cell growth and differentiation of hematopoietic cells through mechanisms other than regulating Rac GTPase activity. Has a critical role in erythropoiesis (By similarity). Also involved in the regulation of growth-related processes in adipocytes and myoblasts. May be involved in regulating spermatogenesis and in the RACGAP1 pathway in neuronal proliferation. Shows strong GAP (GTPase activation) activity towards CDC42 and RAC1 and less towards RHOA. Essential for the early stages of embryogenesis. May play a role in regulating cortical activity through RHOA during cytokinesis. May participate in the regulation of sulfate transport in male germ cells.</text>
</comment>
<comment type="subunit">
    <text evidence="2">Heterotetramer of two molecules each of RACGAP1 and KIF23. Found in the centralspindlin complex. Associates with alpha-, beta- and gamma-tubulin and microtubules. Interacts via its Rho-GAP domain with RND2. Associates with AURKB during M phase. Interacts via its Rho-GAP domain and basic region with PRC1. The interaction with PRC1 inhibits its GAP activity towards CDC42 in vitro, which may be required for maintaining normal spindle morphology. Interacts with SLC26A8 via its N-terminus. Interacts with ECT2; the interaction is direct, occurs at anaphase and during cytokinesis in a microtubule-dependent manner, is enhanced by phosphorylation by PLK1 and phosphorylation at Ser-165 plays a major role in mediating binding. Interacts with RAB11FIP3; the interaction occurs at late telophase. Interacts with KIF23; the interaction is direct.</text>
</comment>
<comment type="subcellular location">
    <subcellularLocation>
        <location evidence="12">Nucleus</location>
    </subcellularLocation>
    <subcellularLocation>
        <location evidence="12">Cytoplasm</location>
    </subcellularLocation>
    <subcellularLocation>
        <location evidence="12">Cytoplasm</location>
        <location evidence="12">Cytoskeleton</location>
        <location evidence="12">Spindle</location>
    </subcellularLocation>
    <subcellularLocation>
        <location evidence="12">Cytoplasmic vesicle</location>
        <location evidence="12">Secretory vesicle</location>
        <location evidence="12">Acrosome</location>
    </subcellularLocation>
    <subcellularLocation>
        <location evidence="2">Cleavage furrow</location>
    </subcellularLocation>
    <subcellularLocation>
        <location evidence="2">Midbody</location>
        <location evidence="2">Midbody ring</location>
    </subcellularLocation>
    <subcellularLocation>
        <location evidence="2">Cell membrane</location>
        <topology evidence="2">Peripheral membrane protein</topology>
        <orientation evidence="2">Cytoplasmic side</orientation>
    </subcellularLocation>
    <text evidence="2">During interphase, localized to the nucleus and cytoplasm along with microtubules, in anaphase, is redistributed to the central spindle and, in telophase and cytokinesis, to the midbody ring, also called Flemming body. Colocalizes with RHOA at the myosin contractile ring during cytokinesis. Colocalizes with ECT2 to the mitotic spindles during anaphase/metaphase, the cleavage furrow during telophase and at the midbody at the end of cytokinesis. Colocalizes with Cdc42 to spindle microtubules from prometaphase to telophase (By similarity). Colocalizes with RND2 in Golgi-derived proacrosomal vesicles and the acrosome.</text>
</comment>
<comment type="tissue specificity">
    <text evidence="9 10 11">Highly expressed in testis, thymus and spleen and weakly expressed in brain, heart, skeletal muscle and kidney. In testis, expression is restricted to germ cells with the highest levels of expression found in spermatocytes. Not detected in adult liver. Also expressed in fetal liver and in several hematopoietic cell lines.</text>
</comment>
<comment type="developmental stage">
    <text evidence="11">At 6.5 dpc expressed in primitive endoderm, embryonic ectoderm, extraembryonic ectoderm and the ectoplacental cone. By 7.5 dpc, a widespread expression was observed in all intra- and extraembryonic tissues and also in the giant cells lining the inner boundary of the deciduum. At 9.5 dpc, expression was elevated in the neuroepithelium of the brain ventricles and the neural tube. By 12.5 dpc, expression remains widespread and in the brain higher levels were observed in the ventricular zone of the two telencephalic lobes, and in the mesencephalon and diencephalon, with the exception of the median sulcus. In adult brain, highest levels of expression were detected in cerebellum, specifically the Purkinje cell layer extending into the molecular layer.</text>
</comment>
<comment type="induction">
    <text evidence="10">Expression is down-regulated during macrophage differentiation of M1 cells.</text>
</comment>
<comment type="domain">
    <text evidence="3">The coiled coil region is indispensible for localization to the midbody during cytokinesis.</text>
</comment>
<comment type="domain">
    <text evidence="1">The phorbol-ester/DAG-type zinc finger domain mediates interaction with membranes enriched in phosphatidylinositol 3,4,5-trisphosphate and is required during mitotic cytokinesis for normal attachment of the midbody to the cell membrane.</text>
</comment>
<comment type="PTM">
    <text evidence="2">Phosphorylated at multiple sites in the midbody during cytokinesis (By similarity). Phosphorylation by AURKB on Ser-388 at the midbody is, at least in part, responsible for exerting its latent GAP activity towards RhoA (By similarity). Phosphorylation on multiple serine residues by PLK1 enhances its association with ECT2 and is critical for cleavage furrow formation (By similarity). Phosphorylation on Ser-165 plays a major role in mediating interaction with ECT2 (By similarity). Phosphorylation on Ser-158 does not appear to contribute to binding to ECT2 (By similarity).</text>
</comment>
<gene>
    <name evidence="22" type="primary">Racgap1</name>
    <name type="synonym">Mgcracgap</name>
</gene>
<sequence>MDTTMVNLWTLFEQLVRRMEIINEGNESIEFIQVVKDFEDFRKKYQRTNQELEKFKDLLLKAETGRSALDVKLKHARNQVDVEIKRRQRAEAECAKLEQQIQLIRDILMCDTSGSIQLSEEQKSALAFLNRGQASSGHAGNNRLSTIDESGSILSDISFDKTDESLDWDSSLVKNFKMKKREKRRSNSRQFIDGPPGPVKKTCSIGSTVDQANESIVAKTTVTVPSDGGPIEAVSTIETLPSWTRSRGKSGPLQPVNSDSALNSRPLEPRTDTDNLGTPQNTGGMRLHDFVSKTVIKPESCVPCGKRIKFGKLSLKCRDCRLVSHPECRDRCPLPCIPPLVGTPVKIGEGMLADFVSQASPMIPAIVVSCVNEIEQRGLTEAGLYRISGCDRTVKELKEKFLKVKTVPLLSKVDDIHVICSLLKDFLRNLKEPLLTFWLSKAFMEAAEITDEDNSTAAMYQAVSELPQANRDTLAFLMIHLQRVSQSPDTKMDIANLAKVFGPTIVAHTVPNPDPVTMFQDIKRQLKVVERLLSLPLEYWNQFMMVDQENIDSQRGNGNSTPRTPDVKVSLLGPVTTPEFQLVKTPLSSSLSQRLYNLSKSTPRFGNKSKSATNLGQQGKFFPAPYLK</sequence>
<accession>Q9WVM1</accession>
<accession>Q3THR5</accession>
<accession>Q3TI41</accession>
<accession>Q3TM81</accession>
<dbReference type="EMBL" id="AF079974">
    <property type="protein sequence ID" value="AAD40487.1"/>
    <property type="molecule type" value="mRNA"/>
</dbReference>
<dbReference type="EMBL" id="AB030252">
    <property type="protein sequence ID" value="BAA90248.1"/>
    <property type="molecule type" value="mRNA"/>
</dbReference>
<dbReference type="EMBL" id="AF212320">
    <property type="protein sequence ID" value="AAG43539.1"/>
    <property type="molecule type" value="mRNA"/>
</dbReference>
<dbReference type="EMBL" id="AF212321">
    <property type="protein sequence ID" value="AAG43540.1"/>
    <property type="molecule type" value="mRNA"/>
</dbReference>
<dbReference type="EMBL" id="AK144608">
    <property type="protein sequence ID" value="BAE25967.1"/>
    <property type="molecule type" value="mRNA"/>
</dbReference>
<dbReference type="EMBL" id="AK154929">
    <property type="protein sequence ID" value="BAE32931.1"/>
    <property type="molecule type" value="mRNA"/>
</dbReference>
<dbReference type="EMBL" id="AK165897">
    <property type="protein sequence ID" value="BAE38446.1"/>
    <property type="molecule type" value="mRNA"/>
</dbReference>
<dbReference type="EMBL" id="AK166084">
    <property type="protein sequence ID" value="BAE38561.1"/>
    <property type="molecule type" value="mRNA"/>
</dbReference>
<dbReference type="EMBL" id="AK168020">
    <property type="protein sequence ID" value="BAE40005.1"/>
    <property type="molecule type" value="mRNA"/>
</dbReference>
<dbReference type="EMBL" id="AK168025">
    <property type="protein sequence ID" value="BAE40010.1"/>
    <property type="molecule type" value="mRNA"/>
</dbReference>
<dbReference type="EMBL" id="AK168170">
    <property type="protein sequence ID" value="BAE40131.1"/>
    <property type="molecule type" value="mRNA"/>
</dbReference>
<dbReference type="EMBL" id="AK168679">
    <property type="protein sequence ID" value="BAE40528.1"/>
    <property type="molecule type" value="mRNA"/>
</dbReference>
<dbReference type="EMBL" id="BC010715">
    <property type="protein sequence ID" value="AAH10715.1"/>
    <property type="molecule type" value="mRNA"/>
</dbReference>
<dbReference type="CCDS" id="CCDS27825.1"/>
<dbReference type="RefSeq" id="NP_001240737.1">
    <property type="nucleotide sequence ID" value="NM_001253808.2"/>
</dbReference>
<dbReference type="RefSeq" id="NP_001240738.1">
    <property type="nucleotide sequence ID" value="NM_001253809.2"/>
</dbReference>
<dbReference type="RefSeq" id="NP_001398794.1">
    <property type="nucleotide sequence ID" value="NM_001411865.1"/>
</dbReference>
<dbReference type="RefSeq" id="NP_001398795.1">
    <property type="nucleotide sequence ID" value="NM_001411866.1"/>
</dbReference>
<dbReference type="RefSeq" id="NP_036155.1">
    <property type="nucleotide sequence ID" value="NM_012025.8"/>
</dbReference>
<dbReference type="RefSeq" id="XP_011243948.1">
    <property type="nucleotide sequence ID" value="XM_011245646.1"/>
</dbReference>
<dbReference type="SMR" id="Q9WVM1"/>
<dbReference type="BioGRID" id="205072">
    <property type="interactions" value="48"/>
</dbReference>
<dbReference type="DIP" id="DIP-42340N"/>
<dbReference type="FunCoup" id="Q9WVM1">
    <property type="interactions" value="2070"/>
</dbReference>
<dbReference type="IntAct" id="Q9WVM1">
    <property type="interactions" value="46"/>
</dbReference>
<dbReference type="MINT" id="Q9WVM1"/>
<dbReference type="STRING" id="10090.ENSMUSP00000126417"/>
<dbReference type="GlyGen" id="Q9WVM1">
    <property type="glycosylation" value="2 sites, 1 O-linked glycan (2 sites)"/>
</dbReference>
<dbReference type="iPTMnet" id="Q9WVM1"/>
<dbReference type="PhosphoSitePlus" id="Q9WVM1"/>
<dbReference type="jPOST" id="Q9WVM1"/>
<dbReference type="PaxDb" id="10090-ENSMUSP00000023756"/>
<dbReference type="PeptideAtlas" id="Q9WVM1"/>
<dbReference type="ProteomicsDB" id="253121"/>
<dbReference type="Pumba" id="Q9WVM1"/>
<dbReference type="Antibodypedia" id="14118">
    <property type="antibodies" value="600 antibodies from 40 providers"/>
</dbReference>
<dbReference type="DNASU" id="26934"/>
<dbReference type="Ensembl" id="ENSMUST00000023756.12">
    <property type="protein sequence ID" value="ENSMUSP00000023756.6"/>
    <property type="gene ID" value="ENSMUSG00000023015.15"/>
</dbReference>
<dbReference type="Ensembl" id="ENSMUST00000171702.8">
    <property type="protein sequence ID" value="ENSMUSP00000126417.2"/>
    <property type="gene ID" value="ENSMUSG00000023015.15"/>
</dbReference>
<dbReference type="GeneID" id="26934"/>
<dbReference type="KEGG" id="mmu:26934"/>
<dbReference type="UCSC" id="uc007xpx.2">
    <property type="organism name" value="mouse"/>
</dbReference>
<dbReference type="AGR" id="MGI:1349423"/>
<dbReference type="CTD" id="29127"/>
<dbReference type="MGI" id="MGI:1349423">
    <property type="gene designation" value="Racgap1"/>
</dbReference>
<dbReference type="VEuPathDB" id="HostDB:ENSMUSG00000023015"/>
<dbReference type="eggNOG" id="KOG3564">
    <property type="taxonomic scope" value="Eukaryota"/>
</dbReference>
<dbReference type="GeneTree" id="ENSGT00940000154610"/>
<dbReference type="HOGENOM" id="CLU_026187_1_0_1"/>
<dbReference type="InParanoid" id="Q9WVM1"/>
<dbReference type="OMA" id="FWEQYIV"/>
<dbReference type="OrthoDB" id="2218807at2759"/>
<dbReference type="PhylomeDB" id="Q9WVM1"/>
<dbReference type="TreeFam" id="TF318102"/>
<dbReference type="Reactome" id="R-MMU-2132295">
    <property type="pathway name" value="MHC class II antigen presentation"/>
</dbReference>
<dbReference type="Reactome" id="R-MMU-6811434">
    <property type="pathway name" value="COPI-dependent Golgi-to-ER retrograde traffic"/>
</dbReference>
<dbReference type="Reactome" id="R-MMU-8980692">
    <property type="pathway name" value="RHOA GTPase cycle"/>
</dbReference>
<dbReference type="Reactome" id="R-MMU-9013026">
    <property type="pathway name" value="RHOB GTPase cycle"/>
</dbReference>
<dbReference type="Reactome" id="R-MMU-9013106">
    <property type="pathway name" value="RHOC GTPase cycle"/>
</dbReference>
<dbReference type="Reactome" id="R-MMU-9013148">
    <property type="pathway name" value="CDC42 GTPase cycle"/>
</dbReference>
<dbReference type="Reactome" id="R-MMU-9013149">
    <property type="pathway name" value="RAC1 GTPase cycle"/>
</dbReference>
<dbReference type="Reactome" id="R-MMU-9013404">
    <property type="pathway name" value="RAC2 GTPase cycle"/>
</dbReference>
<dbReference type="Reactome" id="R-MMU-9013405">
    <property type="pathway name" value="RHOD GTPase cycle"/>
</dbReference>
<dbReference type="Reactome" id="R-MMU-9013423">
    <property type="pathway name" value="RAC3 GTPase cycle"/>
</dbReference>
<dbReference type="Reactome" id="R-MMU-983189">
    <property type="pathway name" value="Kinesins"/>
</dbReference>
<dbReference type="BioGRID-ORCS" id="26934">
    <property type="hits" value="25 hits in 84 CRISPR screens"/>
</dbReference>
<dbReference type="ChiTaRS" id="Racgap1">
    <property type="organism name" value="mouse"/>
</dbReference>
<dbReference type="PRO" id="PR:Q9WVM1"/>
<dbReference type="Proteomes" id="UP000000589">
    <property type="component" value="Chromosome 15"/>
</dbReference>
<dbReference type="RNAct" id="Q9WVM1">
    <property type="molecule type" value="protein"/>
</dbReference>
<dbReference type="Bgee" id="ENSMUSG00000023015">
    <property type="expression patterns" value="Expressed in ventricular zone and 234 other cell types or tissues"/>
</dbReference>
<dbReference type="ExpressionAtlas" id="Q9WVM1">
    <property type="expression patterns" value="baseline and differential"/>
</dbReference>
<dbReference type="GO" id="GO:0001669">
    <property type="term" value="C:acrosomal vesicle"/>
    <property type="evidence" value="ECO:0007669"/>
    <property type="project" value="UniProtKB-SubCell"/>
</dbReference>
<dbReference type="GO" id="GO:0097149">
    <property type="term" value="C:centralspindlin complex"/>
    <property type="evidence" value="ECO:0000250"/>
    <property type="project" value="UniProtKB"/>
</dbReference>
<dbReference type="GO" id="GO:0032154">
    <property type="term" value="C:cleavage furrow"/>
    <property type="evidence" value="ECO:0000250"/>
    <property type="project" value="UniProtKB"/>
</dbReference>
<dbReference type="GO" id="GO:0009898">
    <property type="term" value="C:cytoplasmic side of plasma membrane"/>
    <property type="evidence" value="ECO:0000250"/>
    <property type="project" value="UniProtKB"/>
</dbReference>
<dbReference type="GO" id="GO:0090543">
    <property type="term" value="C:Flemming body"/>
    <property type="evidence" value="ECO:0007669"/>
    <property type="project" value="UniProtKB-SubCell"/>
</dbReference>
<dbReference type="GO" id="GO:0030496">
    <property type="term" value="C:midbody"/>
    <property type="evidence" value="ECO:0000250"/>
    <property type="project" value="UniProtKB"/>
</dbReference>
<dbReference type="GO" id="GO:0072686">
    <property type="term" value="C:mitotic spindle"/>
    <property type="evidence" value="ECO:0000250"/>
    <property type="project" value="UniProtKB"/>
</dbReference>
<dbReference type="GO" id="GO:0005654">
    <property type="term" value="C:nucleoplasm"/>
    <property type="evidence" value="ECO:0007669"/>
    <property type="project" value="Ensembl"/>
</dbReference>
<dbReference type="GO" id="GO:0005634">
    <property type="term" value="C:nucleus"/>
    <property type="evidence" value="ECO:0000250"/>
    <property type="project" value="UniProtKB"/>
</dbReference>
<dbReference type="GO" id="GO:0051233">
    <property type="term" value="C:spindle midzone"/>
    <property type="evidence" value="ECO:0000250"/>
    <property type="project" value="UniProtKB"/>
</dbReference>
<dbReference type="GO" id="GO:0043014">
    <property type="term" value="F:alpha-tubulin binding"/>
    <property type="evidence" value="ECO:0000250"/>
    <property type="project" value="UniProtKB"/>
</dbReference>
<dbReference type="GO" id="GO:0048487">
    <property type="term" value="F:beta-tubulin binding"/>
    <property type="evidence" value="ECO:0000250"/>
    <property type="project" value="UniProtKB"/>
</dbReference>
<dbReference type="GO" id="GO:0043015">
    <property type="term" value="F:gamma-tubulin binding"/>
    <property type="evidence" value="ECO:0000250"/>
    <property type="project" value="UniProtKB"/>
</dbReference>
<dbReference type="GO" id="GO:0005096">
    <property type="term" value="F:GTPase activator activity"/>
    <property type="evidence" value="ECO:0000250"/>
    <property type="project" value="UniProtKB"/>
</dbReference>
<dbReference type="GO" id="GO:0008017">
    <property type="term" value="F:microtubule binding"/>
    <property type="evidence" value="ECO:0000250"/>
    <property type="project" value="UniProtKB"/>
</dbReference>
<dbReference type="GO" id="GO:0005547">
    <property type="term" value="F:phosphatidylinositol-3,4,5-trisphosphate binding"/>
    <property type="evidence" value="ECO:0000250"/>
    <property type="project" value="UniProtKB"/>
</dbReference>
<dbReference type="GO" id="GO:0019901">
    <property type="term" value="F:protein kinase binding"/>
    <property type="evidence" value="ECO:0007669"/>
    <property type="project" value="Ensembl"/>
</dbReference>
<dbReference type="GO" id="GO:0030674">
    <property type="term" value="F:protein-macromolecule adaptor activity"/>
    <property type="evidence" value="ECO:0007669"/>
    <property type="project" value="Ensembl"/>
</dbReference>
<dbReference type="GO" id="GO:0008270">
    <property type="term" value="F:zinc ion binding"/>
    <property type="evidence" value="ECO:0007669"/>
    <property type="project" value="UniProtKB-KW"/>
</dbReference>
<dbReference type="GO" id="GO:0000915">
    <property type="term" value="P:actomyosin contractile ring assembly"/>
    <property type="evidence" value="ECO:0000250"/>
    <property type="project" value="UniProtKB"/>
</dbReference>
<dbReference type="GO" id="GO:0030218">
    <property type="term" value="P:erythrocyte differentiation"/>
    <property type="evidence" value="ECO:0000250"/>
    <property type="project" value="UniProtKB"/>
</dbReference>
<dbReference type="GO" id="GO:0000281">
    <property type="term" value="P:mitotic cytokinesis"/>
    <property type="evidence" value="ECO:0000250"/>
    <property type="project" value="UniProtKB"/>
</dbReference>
<dbReference type="GO" id="GO:0051256">
    <property type="term" value="P:mitotic spindle midzone assembly"/>
    <property type="evidence" value="ECO:0000250"/>
    <property type="project" value="UniProtKB"/>
</dbReference>
<dbReference type="GO" id="GO:0006811">
    <property type="term" value="P:monoatomic ion transport"/>
    <property type="evidence" value="ECO:0007669"/>
    <property type="project" value="UniProtKB-KW"/>
</dbReference>
<dbReference type="GO" id="GO:0007405">
    <property type="term" value="P:neuroblast proliferation"/>
    <property type="evidence" value="ECO:0000270"/>
    <property type="project" value="UniProtKB"/>
</dbReference>
<dbReference type="GO" id="GO:0032467">
    <property type="term" value="P:positive regulation of cytokinesis"/>
    <property type="evidence" value="ECO:0000250"/>
    <property type="project" value="UniProtKB"/>
</dbReference>
<dbReference type="GO" id="GO:0051988">
    <property type="term" value="P:regulation of attachment of spindle microtubules to kinetochore"/>
    <property type="evidence" value="ECO:0000250"/>
    <property type="project" value="UniProtKB"/>
</dbReference>
<dbReference type="GO" id="GO:0045995">
    <property type="term" value="P:regulation of embryonic development"/>
    <property type="evidence" value="ECO:0000315"/>
    <property type="project" value="UniProtKB"/>
</dbReference>
<dbReference type="GO" id="GO:0007165">
    <property type="term" value="P:signal transduction"/>
    <property type="evidence" value="ECO:0007669"/>
    <property type="project" value="InterPro"/>
</dbReference>
<dbReference type="GO" id="GO:0007283">
    <property type="term" value="P:spermatogenesis"/>
    <property type="evidence" value="ECO:0000250"/>
    <property type="project" value="UniProtKB"/>
</dbReference>
<dbReference type="GO" id="GO:1902358">
    <property type="term" value="P:sulfate transmembrane transport"/>
    <property type="evidence" value="ECO:0007669"/>
    <property type="project" value="Ensembl"/>
</dbReference>
<dbReference type="CDD" id="cd20821">
    <property type="entry name" value="C1_MgcRacGAP"/>
    <property type="match status" value="1"/>
</dbReference>
<dbReference type="CDD" id="cd04382">
    <property type="entry name" value="RhoGAP_MgcRacGAP"/>
    <property type="match status" value="1"/>
</dbReference>
<dbReference type="FunFam" id="1.10.555.10:FF:000034">
    <property type="entry name" value="Rac GTPase-activating protein 1"/>
    <property type="match status" value="1"/>
</dbReference>
<dbReference type="FunFam" id="3.30.60.20:FF:000033">
    <property type="entry name" value="Rac GTPase-activating protein 1"/>
    <property type="match status" value="1"/>
</dbReference>
<dbReference type="Gene3D" id="3.30.60.20">
    <property type="match status" value="1"/>
</dbReference>
<dbReference type="Gene3D" id="1.10.555.10">
    <property type="entry name" value="Rho GTPase activation protein"/>
    <property type="match status" value="1"/>
</dbReference>
<dbReference type="InterPro" id="IPR046349">
    <property type="entry name" value="C1-like_sf"/>
</dbReference>
<dbReference type="InterPro" id="IPR002219">
    <property type="entry name" value="PE/DAG-bd"/>
</dbReference>
<dbReference type="InterPro" id="IPR008936">
    <property type="entry name" value="Rho_GTPase_activation_prot"/>
</dbReference>
<dbReference type="InterPro" id="IPR000198">
    <property type="entry name" value="RhoGAP_dom"/>
</dbReference>
<dbReference type="PANTHER" id="PTHR46199">
    <property type="entry name" value="RAC GTPASE-ACTIVATING PROTEIN 1"/>
    <property type="match status" value="1"/>
</dbReference>
<dbReference type="PANTHER" id="PTHR46199:SF3">
    <property type="entry name" value="RAC GTPASE-ACTIVATING PROTEIN 1"/>
    <property type="match status" value="1"/>
</dbReference>
<dbReference type="Pfam" id="PF00130">
    <property type="entry name" value="C1_1"/>
    <property type="match status" value="1"/>
</dbReference>
<dbReference type="Pfam" id="PF00620">
    <property type="entry name" value="RhoGAP"/>
    <property type="match status" value="1"/>
</dbReference>
<dbReference type="SMART" id="SM00109">
    <property type="entry name" value="C1"/>
    <property type="match status" value="1"/>
</dbReference>
<dbReference type="SMART" id="SM00324">
    <property type="entry name" value="RhoGAP"/>
    <property type="match status" value="1"/>
</dbReference>
<dbReference type="SUPFAM" id="SSF57889">
    <property type="entry name" value="Cysteine-rich domain"/>
    <property type="match status" value="1"/>
</dbReference>
<dbReference type="SUPFAM" id="SSF48350">
    <property type="entry name" value="GTPase activation domain, GAP"/>
    <property type="match status" value="1"/>
</dbReference>
<dbReference type="PROSITE" id="PS50238">
    <property type="entry name" value="RHOGAP"/>
    <property type="match status" value="1"/>
</dbReference>
<dbReference type="PROSITE" id="PS00479">
    <property type="entry name" value="ZF_DAG_PE_1"/>
    <property type="match status" value="1"/>
</dbReference>
<dbReference type="PROSITE" id="PS50081">
    <property type="entry name" value="ZF_DAG_PE_2"/>
    <property type="match status" value="1"/>
</dbReference>